<feature type="chain" id="PRO_0000126971" description="Phenylalanine--tRNA ligase beta subunit">
    <location>
        <begin position="1"/>
        <end position="811"/>
    </location>
</feature>
<feature type="domain" description="tRNA-binding" evidence="1">
    <location>
        <begin position="39"/>
        <end position="151"/>
    </location>
</feature>
<feature type="domain" description="B5" evidence="1">
    <location>
        <begin position="409"/>
        <end position="495"/>
    </location>
</feature>
<feature type="domain" description="FDX-ACB" evidence="1">
    <location>
        <begin position="717"/>
        <end position="810"/>
    </location>
</feature>
<feature type="binding site" evidence="1">
    <location>
        <position position="473"/>
    </location>
    <ligand>
        <name>Mg(2+)</name>
        <dbReference type="ChEBI" id="CHEBI:18420"/>
        <note>shared with alpha subunit</note>
    </ligand>
</feature>
<feature type="binding site" evidence="1">
    <location>
        <position position="479"/>
    </location>
    <ligand>
        <name>Mg(2+)</name>
        <dbReference type="ChEBI" id="CHEBI:18420"/>
        <note>shared with alpha subunit</note>
    </ligand>
</feature>
<feature type="binding site" evidence="1">
    <location>
        <position position="482"/>
    </location>
    <ligand>
        <name>Mg(2+)</name>
        <dbReference type="ChEBI" id="CHEBI:18420"/>
        <note>shared with alpha subunit</note>
    </ligand>
</feature>
<feature type="binding site" evidence="1">
    <location>
        <position position="483"/>
    </location>
    <ligand>
        <name>Mg(2+)</name>
        <dbReference type="ChEBI" id="CHEBI:18420"/>
        <note>shared with alpha subunit</note>
    </ligand>
</feature>
<evidence type="ECO:0000255" key="1">
    <source>
        <dbReference type="HAMAP-Rule" id="MF_00283"/>
    </source>
</evidence>
<organism>
    <name type="scientific">Synechococcus sp. (strain ATCC 27144 / PCC 6301 / SAUG 1402/1)</name>
    <name type="common">Anacystis nidulans</name>
    <dbReference type="NCBI Taxonomy" id="269084"/>
    <lineage>
        <taxon>Bacteria</taxon>
        <taxon>Bacillati</taxon>
        <taxon>Cyanobacteriota</taxon>
        <taxon>Cyanophyceae</taxon>
        <taxon>Synechococcales</taxon>
        <taxon>Synechococcaceae</taxon>
        <taxon>Synechococcus</taxon>
    </lineage>
</organism>
<protein>
    <recommendedName>
        <fullName evidence="1">Phenylalanine--tRNA ligase beta subunit</fullName>
        <ecNumber evidence="1">6.1.1.20</ecNumber>
    </recommendedName>
    <alternativeName>
        <fullName evidence="1">Phenylalanyl-tRNA synthetase beta subunit</fullName>
        <shortName evidence="1">PheRS</shortName>
    </alternativeName>
</protein>
<dbReference type="EC" id="6.1.1.20" evidence="1"/>
<dbReference type="EMBL" id="AP008231">
    <property type="protein sequence ID" value="BAD78450.1"/>
    <property type="molecule type" value="Genomic_DNA"/>
</dbReference>
<dbReference type="RefSeq" id="WP_011242574.1">
    <property type="nucleotide sequence ID" value="NC_006576.1"/>
</dbReference>
<dbReference type="SMR" id="Q5N5G8"/>
<dbReference type="KEGG" id="syc:syc0260_d"/>
<dbReference type="eggNOG" id="COG0072">
    <property type="taxonomic scope" value="Bacteria"/>
</dbReference>
<dbReference type="eggNOG" id="COG0073">
    <property type="taxonomic scope" value="Bacteria"/>
</dbReference>
<dbReference type="Proteomes" id="UP000001175">
    <property type="component" value="Chromosome"/>
</dbReference>
<dbReference type="GO" id="GO:0009328">
    <property type="term" value="C:phenylalanine-tRNA ligase complex"/>
    <property type="evidence" value="ECO:0007669"/>
    <property type="project" value="TreeGrafter"/>
</dbReference>
<dbReference type="GO" id="GO:0005524">
    <property type="term" value="F:ATP binding"/>
    <property type="evidence" value="ECO:0007669"/>
    <property type="project" value="UniProtKB-UniRule"/>
</dbReference>
<dbReference type="GO" id="GO:0000287">
    <property type="term" value="F:magnesium ion binding"/>
    <property type="evidence" value="ECO:0007669"/>
    <property type="project" value="UniProtKB-UniRule"/>
</dbReference>
<dbReference type="GO" id="GO:0004826">
    <property type="term" value="F:phenylalanine-tRNA ligase activity"/>
    <property type="evidence" value="ECO:0007669"/>
    <property type="project" value="UniProtKB-UniRule"/>
</dbReference>
<dbReference type="GO" id="GO:0000049">
    <property type="term" value="F:tRNA binding"/>
    <property type="evidence" value="ECO:0007669"/>
    <property type="project" value="UniProtKB-KW"/>
</dbReference>
<dbReference type="GO" id="GO:0006432">
    <property type="term" value="P:phenylalanyl-tRNA aminoacylation"/>
    <property type="evidence" value="ECO:0007669"/>
    <property type="project" value="UniProtKB-UniRule"/>
</dbReference>
<dbReference type="CDD" id="cd00769">
    <property type="entry name" value="PheRS_beta_core"/>
    <property type="match status" value="1"/>
</dbReference>
<dbReference type="CDD" id="cd02796">
    <property type="entry name" value="tRNA_bind_bactPheRS"/>
    <property type="match status" value="1"/>
</dbReference>
<dbReference type="FunFam" id="2.40.50.140:FF:000045">
    <property type="entry name" value="Phenylalanine--tRNA ligase beta subunit"/>
    <property type="match status" value="1"/>
</dbReference>
<dbReference type="FunFam" id="3.30.70.380:FF:000001">
    <property type="entry name" value="Phenylalanine--tRNA ligase beta subunit"/>
    <property type="match status" value="1"/>
</dbReference>
<dbReference type="FunFam" id="3.50.40.10:FF:000001">
    <property type="entry name" value="Phenylalanine--tRNA ligase beta subunit"/>
    <property type="match status" value="1"/>
</dbReference>
<dbReference type="Gene3D" id="3.30.56.10">
    <property type="match status" value="2"/>
</dbReference>
<dbReference type="Gene3D" id="3.30.930.10">
    <property type="entry name" value="Bira Bifunctional Protein, Domain 2"/>
    <property type="match status" value="1"/>
</dbReference>
<dbReference type="Gene3D" id="3.30.70.380">
    <property type="entry name" value="Ferrodoxin-fold anticodon-binding domain"/>
    <property type="match status" value="1"/>
</dbReference>
<dbReference type="Gene3D" id="2.40.50.140">
    <property type="entry name" value="Nucleic acid-binding proteins"/>
    <property type="match status" value="1"/>
</dbReference>
<dbReference type="Gene3D" id="3.50.40.10">
    <property type="entry name" value="Phenylalanyl-trna Synthetase, Chain B, domain 3"/>
    <property type="match status" value="1"/>
</dbReference>
<dbReference type="HAMAP" id="MF_00283">
    <property type="entry name" value="Phe_tRNA_synth_beta1"/>
    <property type="match status" value="1"/>
</dbReference>
<dbReference type="InterPro" id="IPR045864">
    <property type="entry name" value="aa-tRNA-synth_II/BPL/LPL"/>
</dbReference>
<dbReference type="InterPro" id="IPR005146">
    <property type="entry name" value="B3/B4_tRNA-bd"/>
</dbReference>
<dbReference type="InterPro" id="IPR009061">
    <property type="entry name" value="DNA-bd_dom_put_sf"/>
</dbReference>
<dbReference type="InterPro" id="IPR005121">
    <property type="entry name" value="Fdx_antiC-bd"/>
</dbReference>
<dbReference type="InterPro" id="IPR036690">
    <property type="entry name" value="Fdx_antiC-bd_sf"/>
</dbReference>
<dbReference type="InterPro" id="IPR012340">
    <property type="entry name" value="NA-bd_OB-fold"/>
</dbReference>
<dbReference type="InterPro" id="IPR045060">
    <property type="entry name" value="Phe-tRNA-ligase_IIc_bsu"/>
</dbReference>
<dbReference type="InterPro" id="IPR004532">
    <property type="entry name" value="Phe-tRNA-ligase_IIc_bsu_bact"/>
</dbReference>
<dbReference type="InterPro" id="IPR020825">
    <property type="entry name" value="Phe-tRNA_synthase-like_B3/B4"/>
</dbReference>
<dbReference type="InterPro" id="IPR041616">
    <property type="entry name" value="PheRS_beta_core"/>
</dbReference>
<dbReference type="InterPro" id="IPR002547">
    <property type="entry name" value="tRNA-bd_dom"/>
</dbReference>
<dbReference type="InterPro" id="IPR033714">
    <property type="entry name" value="tRNA_bind_bactPheRS"/>
</dbReference>
<dbReference type="InterPro" id="IPR005147">
    <property type="entry name" value="tRNA_synthase_B5-dom"/>
</dbReference>
<dbReference type="NCBIfam" id="TIGR00472">
    <property type="entry name" value="pheT_bact"/>
    <property type="match status" value="1"/>
</dbReference>
<dbReference type="NCBIfam" id="NF045760">
    <property type="entry name" value="YtpR"/>
    <property type="match status" value="1"/>
</dbReference>
<dbReference type="PANTHER" id="PTHR10947:SF0">
    <property type="entry name" value="PHENYLALANINE--TRNA LIGASE BETA SUBUNIT"/>
    <property type="match status" value="1"/>
</dbReference>
<dbReference type="PANTHER" id="PTHR10947">
    <property type="entry name" value="PHENYLALANYL-TRNA SYNTHETASE BETA CHAIN AND LEUCINE-RICH REPEAT-CONTAINING PROTEIN 47"/>
    <property type="match status" value="1"/>
</dbReference>
<dbReference type="Pfam" id="PF03483">
    <property type="entry name" value="B3_4"/>
    <property type="match status" value="1"/>
</dbReference>
<dbReference type="Pfam" id="PF03484">
    <property type="entry name" value="B5"/>
    <property type="match status" value="1"/>
</dbReference>
<dbReference type="Pfam" id="PF03147">
    <property type="entry name" value="FDX-ACB"/>
    <property type="match status" value="1"/>
</dbReference>
<dbReference type="Pfam" id="PF01588">
    <property type="entry name" value="tRNA_bind"/>
    <property type="match status" value="1"/>
</dbReference>
<dbReference type="Pfam" id="PF17759">
    <property type="entry name" value="tRNA_synthFbeta"/>
    <property type="match status" value="1"/>
</dbReference>
<dbReference type="SMART" id="SM00873">
    <property type="entry name" value="B3_4"/>
    <property type="match status" value="1"/>
</dbReference>
<dbReference type="SMART" id="SM00874">
    <property type="entry name" value="B5"/>
    <property type="match status" value="1"/>
</dbReference>
<dbReference type="SMART" id="SM00896">
    <property type="entry name" value="FDX-ACB"/>
    <property type="match status" value="1"/>
</dbReference>
<dbReference type="SUPFAM" id="SSF54991">
    <property type="entry name" value="Anticodon-binding domain of PheRS"/>
    <property type="match status" value="1"/>
</dbReference>
<dbReference type="SUPFAM" id="SSF55681">
    <property type="entry name" value="Class II aaRS and biotin synthetases"/>
    <property type="match status" value="1"/>
</dbReference>
<dbReference type="SUPFAM" id="SSF50249">
    <property type="entry name" value="Nucleic acid-binding proteins"/>
    <property type="match status" value="1"/>
</dbReference>
<dbReference type="SUPFAM" id="SSF56037">
    <property type="entry name" value="PheT/TilS domain"/>
    <property type="match status" value="1"/>
</dbReference>
<dbReference type="SUPFAM" id="SSF46955">
    <property type="entry name" value="Putative DNA-binding domain"/>
    <property type="match status" value="1"/>
</dbReference>
<dbReference type="PROSITE" id="PS51483">
    <property type="entry name" value="B5"/>
    <property type="match status" value="1"/>
</dbReference>
<dbReference type="PROSITE" id="PS51447">
    <property type="entry name" value="FDX_ACB"/>
    <property type="match status" value="1"/>
</dbReference>
<dbReference type="PROSITE" id="PS50886">
    <property type="entry name" value="TRBD"/>
    <property type="match status" value="1"/>
</dbReference>
<keyword id="KW-0030">Aminoacyl-tRNA synthetase</keyword>
<keyword id="KW-0067">ATP-binding</keyword>
<keyword id="KW-0963">Cytoplasm</keyword>
<keyword id="KW-0436">Ligase</keyword>
<keyword id="KW-0460">Magnesium</keyword>
<keyword id="KW-0479">Metal-binding</keyword>
<keyword id="KW-0547">Nucleotide-binding</keyword>
<keyword id="KW-0648">Protein biosynthesis</keyword>
<keyword id="KW-0694">RNA-binding</keyword>
<keyword id="KW-0820">tRNA-binding</keyword>
<reference key="1">
    <citation type="journal article" date="2007" name="Photosyn. Res.">
        <title>Complete nucleotide sequence of the freshwater unicellular cyanobacterium Synechococcus elongatus PCC 6301 chromosome: gene content and organization.</title>
        <authorList>
            <person name="Sugita C."/>
            <person name="Ogata K."/>
            <person name="Shikata M."/>
            <person name="Jikuya H."/>
            <person name="Takano J."/>
            <person name="Furumichi M."/>
            <person name="Kanehisa M."/>
            <person name="Omata T."/>
            <person name="Sugiura M."/>
            <person name="Sugita M."/>
        </authorList>
    </citation>
    <scope>NUCLEOTIDE SEQUENCE [LARGE SCALE GENOMIC DNA]</scope>
    <source>
        <strain>ATCC 27144 / PCC 6301 / SAUG 1402/1</strain>
    </source>
</reference>
<sequence>MRISLNWLRELVQVDLEPEVLAEKLTLAGFEVEEIEDRRTWAAGVVVGRVLEREQHPNADRLSVCQVEIGQAEPVTIVCGASNVRADIWVAVATLGSYLPCIDLKLKPTKLRGVRSEGMICSLSELGLTKESEGIHIFPEDAGLQAGQPVGPLLGLDDVVLDLTSTANRADALSLIGIAREVRALTAATLTLPEVGTADLSRTTLSWRSLYKVKPGSHYSGTIIEGVTIAPSPEWLQKRLQLAGIRTINNVVDITNYILLEYGQPLHAFDRQKLQAIAGSSDLAIGVRSAQAGETLKTLDDQERTLAEAALVITAGDCPVALAGVMGGADSEVSQETTQLLLEAAWFEPIAVRRSARSQGLRTEASARYERGVNVTELPIATQRAIDLLLQIAGGTVISQTVATTTQTEPEHSITLRLQRINELLGPVQAEDEELKDLGADDIERLLTAIGCHLTLVDDAVWQVRVPPYRYRDLEREIDLIEEVARLYGYDNFGETLPPLGSDEGALSIDESLRRQIRAVCRGVGLTELQHYSLVKPGSDRQVHLANPLLAEYSALRLDLLSGLIDAFQYNWEQGNGPLWGFEIGRIFWREEDGFFEADRMGGILGGDPSRGRWQRGGKEQAIDWYAAKGVLEEIFERFGLTIEFQPDRQDDRFHPGRTASLWLQGDRLGRFGQLHPSLCEGRGLPAEVYAFELDLDVWLDHLDQPERQVPRFQPYSSFPASDRDLAFFVDQSVTVAELERIIRRQGGALLSEVELFDQYCGEHVPENQRSLAFRLTYRASDRTLTEAEVEPVHDQVRQSLVERFRVTLRS</sequence>
<name>SYFB_SYNP6</name>
<proteinExistence type="inferred from homology"/>
<comment type="catalytic activity">
    <reaction evidence="1">
        <text>tRNA(Phe) + L-phenylalanine + ATP = L-phenylalanyl-tRNA(Phe) + AMP + diphosphate + H(+)</text>
        <dbReference type="Rhea" id="RHEA:19413"/>
        <dbReference type="Rhea" id="RHEA-COMP:9668"/>
        <dbReference type="Rhea" id="RHEA-COMP:9699"/>
        <dbReference type="ChEBI" id="CHEBI:15378"/>
        <dbReference type="ChEBI" id="CHEBI:30616"/>
        <dbReference type="ChEBI" id="CHEBI:33019"/>
        <dbReference type="ChEBI" id="CHEBI:58095"/>
        <dbReference type="ChEBI" id="CHEBI:78442"/>
        <dbReference type="ChEBI" id="CHEBI:78531"/>
        <dbReference type="ChEBI" id="CHEBI:456215"/>
        <dbReference type="EC" id="6.1.1.20"/>
    </reaction>
</comment>
<comment type="cofactor">
    <cofactor evidence="1">
        <name>Mg(2+)</name>
        <dbReference type="ChEBI" id="CHEBI:18420"/>
    </cofactor>
    <text evidence="1">Binds 2 magnesium ions per tetramer.</text>
</comment>
<comment type="subunit">
    <text evidence="1">Tetramer of two alpha and two beta subunits.</text>
</comment>
<comment type="subcellular location">
    <subcellularLocation>
        <location>Cytoplasm</location>
    </subcellularLocation>
</comment>
<comment type="similarity">
    <text evidence="1">Belongs to the phenylalanyl-tRNA synthetase beta subunit family. Type 1 subfamily.</text>
</comment>
<accession>Q5N5G8</accession>
<gene>
    <name evidence="1" type="primary">pheT</name>
    <name type="ordered locus">syc0260_d</name>
</gene>